<gene>
    <name type="ordered locus">Pcar_2335</name>
</gene>
<feature type="chain" id="PRO_0000257094" description="Probable transcriptional regulatory protein Pcar_2335">
    <location>
        <begin position="1"/>
        <end position="248"/>
    </location>
</feature>
<proteinExistence type="inferred from homology"/>
<reference key="1">
    <citation type="submission" date="2005-10" db="EMBL/GenBank/DDBJ databases">
        <title>Complete sequence of Pelobacter carbinolicus DSM 2380.</title>
        <authorList>
            <person name="Copeland A."/>
            <person name="Lucas S."/>
            <person name="Lapidus A."/>
            <person name="Barry K."/>
            <person name="Detter J.C."/>
            <person name="Glavina T."/>
            <person name="Hammon N."/>
            <person name="Israni S."/>
            <person name="Pitluck S."/>
            <person name="Chertkov O."/>
            <person name="Schmutz J."/>
            <person name="Larimer F."/>
            <person name="Land M."/>
            <person name="Kyrpides N."/>
            <person name="Ivanova N."/>
            <person name="Richardson P."/>
        </authorList>
    </citation>
    <scope>NUCLEOTIDE SEQUENCE [LARGE SCALE GENOMIC DNA]</scope>
    <source>
        <strain>DSM 2380 / NBRC 103641 / GraBd1</strain>
    </source>
</reference>
<comment type="subcellular location">
    <subcellularLocation>
        <location evidence="1">Cytoplasm</location>
    </subcellularLocation>
</comment>
<comment type="similarity">
    <text evidence="1">Belongs to the TACO1 family.</text>
</comment>
<name>Y2335_SYNC1</name>
<organism>
    <name type="scientific">Syntrophotalea carbinolica (strain DSM 2380 / NBRC 103641 / GraBd1)</name>
    <name type="common">Pelobacter carbinolicus</name>
    <dbReference type="NCBI Taxonomy" id="338963"/>
    <lineage>
        <taxon>Bacteria</taxon>
        <taxon>Pseudomonadati</taxon>
        <taxon>Thermodesulfobacteriota</taxon>
        <taxon>Desulfuromonadia</taxon>
        <taxon>Desulfuromonadales</taxon>
        <taxon>Syntrophotaleaceae</taxon>
        <taxon>Syntrophotalea</taxon>
    </lineage>
</organism>
<sequence length="248" mass="26974">MAGHSKWANIKHRKGAQDAKRGKIFTKLIKEITVAAKIGGGDLEANARLRLAVDKAKQANMPKDNIERAIKKGTGDLDGVTYEEGTFEGYGPGGVAVIVEFMTDNRTRTVADVRHSFNKFGGSLGVSGSVAFMFDRKGQIIFGENSDFEKIFEVALEAGAEDVNDEDGVTEVITAPADFETVRNTLAEQGLTPESAEVTMIPQNMTAVEGKQAESLMKMIDMLEDNDDVQNVFANFDISDEEMARIMG</sequence>
<dbReference type="EMBL" id="CP000142">
    <property type="protein sequence ID" value="ABA89574.1"/>
    <property type="molecule type" value="Genomic_DNA"/>
</dbReference>
<dbReference type="RefSeq" id="WP_011342096.1">
    <property type="nucleotide sequence ID" value="NC_007498.2"/>
</dbReference>
<dbReference type="SMR" id="Q3A233"/>
<dbReference type="STRING" id="338963.Pcar_2335"/>
<dbReference type="KEGG" id="pca:Pcar_2335"/>
<dbReference type="eggNOG" id="COG0217">
    <property type="taxonomic scope" value="Bacteria"/>
</dbReference>
<dbReference type="HOGENOM" id="CLU_062974_2_2_7"/>
<dbReference type="OrthoDB" id="9781053at2"/>
<dbReference type="Proteomes" id="UP000002534">
    <property type="component" value="Chromosome"/>
</dbReference>
<dbReference type="GO" id="GO:0005829">
    <property type="term" value="C:cytosol"/>
    <property type="evidence" value="ECO:0007669"/>
    <property type="project" value="TreeGrafter"/>
</dbReference>
<dbReference type="GO" id="GO:0003677">
    <property type="term" value="F:DNA binding"/>
    <property type="evidence" value="ECO:0007669"/>
    <property type="project" value="UniProtKB-UniRule"/>
</dbReference>
<dbReference type="GO" id="GO:0006355">
    <property type="term" value="P:regulation of DNA-templated transcription"/>
    <property type="evidence" value="ECO:0007669"/>
    <property type="project" value="UniProtKB-UniRule"/>
</dbReference>
<dbReference type="FunFam" id="1.10.10.200:FF:000001">
    <property type="entry name" value="Probable transcriptional regulatory protein YebC"/>
    <property type="match status" value="1"/>
</dbReference>
<dbReference type="FunFam" id="3.30.70.980:FF:000002">
    <property type="entry name" value="Probable transcriptional regulatory protein YebC"/>
    <property type="match status" value="1"/>
</dbReference>
<dbReference type="Gene3D" id="1.10.10.200">
    <property type="match status" value="1"/>
</dbReference>
<dbReference type="Gene3D" id="3.30.70.980">
    <property type="match status" value="2"/>
</dbReference>
<dbReference type="HAMAP" id="MF_00693">
    <property type="entry name" value="Transcrip_reg_TACO1"/>
    <property type="match status" value="1"/>
</dbReference>
<dbReference type="InterPro" id="IPR017856">
    <property type="entry name" value="Integrase-like_N"/>
</dbReference>
<dbReference type="InterPro" id="IPR048300">
    <property type="entry name" value="TACO1_YebC-like_2nd/3rd_dom"/>
</dbReference>
<dbReference type="InterPro" id="IPR049083">
    <property type="entry name" value="TACO1_YebC_N"/>
</dbReference>
<dbReference type="InterPro" id="IPR002876">
    <property type="entry name" value="Transcrip_reg_TACO1-like"/>
</dbReference>
<dbReference type="InterPro" id="IPR026564">
    <property type="entry name" value="Transcrip_reg_TACO1-like_dom3"/>
</dbReference>
<dbReference type="InterPro" id="IPR029072">
    <property type="entry name" value="YebC-like"/>
</dbReference>
<dbReference type="NCBIfam" id="NF001030">
    <property type="entry name" value="PRK00110.1"/>
    <property type="match status" value="1"/>
</dbReference>
<dbReference type="NCBIfam" id="NF009044">
    <property type="entry name" value="PRK12378.1"/>
    <property type="match status" value="1"/>
</dbReference>
<dbReference type="NCBIfam" id="TIGR01033">
    <property type="entry name" value="YebC/PmpR family DNA-binding transcriptional regulator"/>
    <property type="match status" value="1"/>
</dbReference>
<dbReference type="PANTHER" id="PTHR12532:SF6">
    <property type="entry name" value="TRANSCRIPTIONAL REGULATORY PROTEIN YEBC-RELATED"/>
    <property type="match status" value="1"/>
</dbReference>
<dbReference type="PANTHER" id="PTHR12532">
    <property type="entry name" value="TRANSLATIONAL ACTIVATOR OF CYTOCHROME C OXIDASE 1"/>
    <property type="match status" value="1"/>
</dbReference>
<dbReference type="Pfam" id="PF20772">
    <property type="entry name" value="TACO1_YebC_N"/>
    <property type="match status" value="1"/>
</dbReference>
<dbReference type="Pfam" id="PF01709">
    <property type="entry name" value="Transcrip_reg"/>
    <property type="match status" value="1"/>
</dbReference>
<dbReference type="SUPFAM" id="SSF75625">
    <property type="entry name" value="YebC-like"/>
    <property type="match status" value="1"/>
</dbReference>
<evidence type="ECO:0000255" key="1">
    <source>
        <dbReference type="HAMAP-Rule" id="MF_00693"/>
    </source>
</evidence>
<accession>Q3A233</accession>
<keyword id="KW-0963">Cytoplasm</keyword>
<keyword id="KW-0238">DNA-binding</keyword>
<keyword id="KW-1185">Reference proteome</keyword>
<keyword id="KW-0804">Transcription</keyword>
<keyword id="KW-0805">Transcription regulation</keyword>
<protein>
    <recommendedName>
        <fullName evidence="1">Probable transcriptional regulatory protein Pcar_2335</fullName>
    </recommendedName>
</protein>